<dbReference type="EC" id="3.1.1.-"/>
<dbReference type="EMBL" id="BC082381">
    <property type="protein sequence ID" value="AAH82381.1"/>
    <property type="molecule type" value="mRNA"/>
</dbReference>
<dbReference type="RefSeq" id="NP_001087855.1">
    <property type="nucleotide sequence ID" value="NM_001094386.1"/>
</dbReference>
<dbReference type="SMR" id="Q641F6"/>
<dbReference type="ESTHER" id="xenla-q641f6">
    <property type="family name" value="Phospholipase"/>
</dbReference>
<dbReference type="GlyCosmos" id="Q641F6">
    <property type="glycosylation" value="5 sites, No reported glycans"/>
</dbReference>
<dbReference type="DNASU" id="447716"/>
<dbReference type="GeneID" id="447716"/>
<dbReference type="KEGG" id="xla:447716"/>
<dbReference type="AGR" id="Xenbase:XB-GENE-6253404"/>
<dbReference type="CTD" id="447716"/>
<dbReference type="Xenbase" id="XB-GENE-6253404">
    <property type="gene designation" value="liph.S"/>
</dbReference>
<dbReference type="OrthoDB" id="199913at2759"/>
<dbReference type="Proteomes" id="UP000186698">
    <property type="component" value="Chromosome 2S"/>
</dbReference>
<dbReference type="Bgee" id="447716">
    <property type="expression patterns" value="Expressed in egg cell and 12 other cell types or tissues"/>
</dbReference>
<dbReference type="GO" id="GO:0005615">
    <property type="term" value="C:extracellular space"/>
    <property type="evidence" value="ECO:0000318"/>
    <property type="project" value="GO_Central"/>
</dbReference>
<dbReference type="GO" id="GO:0005886">
    <property type="term" value="C:plasma membrane"/>
    <property type="evidence" value="ECO:0007669"/>
    <property type="project" value="UniProtKB-SubCell"/>
</dbReference>
<dbReference type="GO" id="GO:0052689">
    <property type="term" value="F:carboxylic ester hydrolase activity"/>
    <property type="evidence" value="ECO:0007669"/>
    <property type="project" value="InterPro"/>
</dbReference>
<dbReference type="GO" id="GO:0004620">
    <property type="term" value="F:phospholipase activity"/>
    <property type="evidence" value="ECO:0000318"/>
    <property type="project" value="GO_Central"/>
</dbReference>
<dbReference type="GO" id="GO:0016042">
    <property type="term" value="P:lipid catabolic process"/>
    <property type="evidence" value="ECO:0000318"/>
    <property type="project" value="GO_Central"/>
</dbReference>
<dbReference type="CDD" id="cd00707">
    <property type="entry name" value="Pancreat_lipase_like"/>
    <property type="match status" value="1"/>
</dbReference>
<dbReference type="FunFam" id="3.40.50.1820:FF:000063">
    <property type="entry name" value="Lipase member H"/>
    <property type="match status" value="1"/>
</dbReference>
<dbReference type="Gene3D" id="3.40.50.1820">
    <property type="entry name" value="alpha/beta hydrolase"/>
    <property type="match status" value="1"/>
</dbReference>
<dbReference type="InterPro" id="IPR029058">
    <property type="entry name" value="AB_hydrolase_fold"/>
</dbReference>
<dbReference type="InterPro" id="IPR013818">
    <property type="entry name" value="Lipase"/>
</dbReference>
<dbReference type="InterPro" id="IPR016272">
    <property type="entry name" value="Lipase_LIPH"/>
</dbReference>
<dbReference type="InterPro" id="IPR033906">
    <property type="entry name" value="Lipase_N"/>
</dbReference>
<dbReference type="InterPro" id="IPR000734">
    <property type="entry name" value="TAG_lipase"/>
</dbReference>
<dbReference type="PANTHER" id="PTHR11610">
    <property type="entry name" value="LIPASE"/>
    <property type="match status" value="1"/>
</dbReference>
<dbReference type="PANTHER" id="PTHR11610:SF12">
    <property type="entry name" value="LIPASE MEMBER H"/>
    <property type="match status" value="1"/>
</dbReference>
<dbReference type="Pfam" id="PF00151">
    <property type="entry name" value="Lipase"/>
    <property type="match status" value="1"/>
</dbReference>
<dbReference type="PIRSF" id="PIRSF000865">
    <property type="entry name" value="Lipoprotein_lipase_LIPH"/>
    <property type="match status" value="1"/>
</dbReference>
<dbReference type="PRINTS" id="PR00821">
    <property type="entry name" value="TAGLIPASE"/>
</dbReference>
<dbReference type="SUPFAM" id="SSF53474">
    <property type="entry name" value="alpha/beta-Hydrolases"/>
    <property type="match status" value="1"/>
</dbReference>
<comment type="function">
    <text evidence="2">Hydrolyzes specifically phosphatidic acid (PA) to produce 2-acyl lysophosphatidic acid (LPA; a potent bioactive lipid mediator) and fatty acid (By similarity). Does not hydrolyze other phospholipids, like phosphatidylserine (PS), phosphatidylcholine (PC) and phosphatidylethanolamine (PE) or triacylglycerol (TG) (By similarity).</text>
</comment>
<comment type="catalytic activity">
    <reaction evidence="2">
        <text>1-hexadecanoyl-2-(9Z-octadecenoyl)-sn-glycero-3-phosphate + H2O = 2-(9Z-octadecenoyl)-sn-glycero-3-phosphate + hexadecanoate + H(+)</text>
        <dbReference type="Rhea" id="RHEA:40943"/>
        <dbReference type="ChEBI" id="CHEBI:7896"/>
        <dbReference type="ChEBI" id="CHEBI:15377"/>
        <dbReference type="ChEBI" id="CHEBI:15378"/>
        <dbReference type="ChEBI" id="CHEBI:64839"/>
        <dbReference type="ChEBI" id="CHEBI:77593"/>
    </reaction>
    <physiologicalReaction direction="left-to-right" evidence="2">
        <dbReference type="Rhea" id="RHEA:40944"/>
    </physiologicalReaction>
</comment>
<comment type="subcellular location">
    <subcellularLocation>
        <location evidence="2">Secreted</location>
    </subcellularLocation>
    <subcellularLocation>
        <location evidence="2">Cell membrane</location>
        <topology>Peripheral membrane protein</topology>
    </subcellularLocation>
</comment>
<comment type="similarity">
    <text evidence="4">Belongs to the AB hydrolase superfamily. Lipase family.</text>
</comment>
<gene>
    <name type="primary">liph-b</name>
</gene>
<proteinExistence type="evidence at transcript level"/>
<evidence type="ECO:0000250" key="1"/>
<evidence type="ECO:0000250" key="2">
    <source>
        <dbReference type="UniProtKB" id="Q8WWY8"/>
    </source>
</evidence>
<evidence type="ECO:0000255" key="3"/>
<evidence type="ECO:0000305" key="4"/>
<reference key="1">
    <citation type="submission" date="2004-09" db="EMBL/GenBank/DDBJ databases">
        <authorList>
            <consortium name="NIH - Xenopus Gene Collection (XGC) project"/>
        </authorList>
    </citation>
    <scope>NUCLEOTIDE SEQUENCE [LARGE SCALE MRNA]</scope>
    <source>
        <tissue>Embryo</tissue>
    </source>
</reference>
<accession>Q641F6</accession>
<protein>
    <recommendedName>
        <fullName>Lipase member H-B</fullName>
        <ecNumber>3.1.1.-</ecNumber>
    </recommendedName>
</protein>
<sequence>MLLSFYFNGLLLVGCLLSWGRSDTEGQCHSFTDLNIHNSIIGTALKVQLLLYTPENPKCAQDLNEDNSTGFQYLNVTRKTVFITHGYRPTGSPPVWIDNIVTKFLDIQDFNVILVDWNRGATTVLYHNAAAKTRKVADILKRLIDNMLSQGATLDSIYMVGVSLGAHISGFVGKMYNGSIGRITGLDPAGPLFNGKPPEERLHYTDAQFVDVVHTDTDGLGYKESLGHIDFYPNGGTDQPGCPKTILSGSEYFKCDHQRSVFLYIASLTNNGDLVGFPCKSYRDYRIGNCTNCKEFLPLSCPVFGFYADKWKDHLVKKNPPGTKAFFDTAAKDPFCIFHYYLDIMTWSSQTRRGYITIRLMSLNGNVTESKLDKDHATFEQYKEVSLLAKFDQDLDPMTRISVTFTTGSVIGPKFKLRVLRMRLRPLTNTNRPILCRYDFVLLENVEMEFNPIPCEDTNL</sequence>
<organism>
    <name type="scientific">Xenopus laevis</name>
    <name type="common">African clawed frog</name>
    <dbReference type="NCBI Taxonomy" id="8355"/>
    <lineage>
        <taxon>Eukaryota</taxon>
        <taxon>Metazoa</taxon>
        <taxon>Chordata</taxon>
        <taxon>Craniata</taxon>
        <taxon>Vertebrata</taxon>
        <taxon>Euteleostomi</taxon>
        <taxon>Amphibia</taxon>
        <taxon>Batrachia</taxon>
        <taxon>Anura</taxon>
        <taxon>Pipoidea</taxon>
        <taxon>Pipidae</taxon>
        <taxon>Xenopodinae</taxon>
        <taxon>Xenopus</taxon>
        <taxon>Xenopus</taxon>
    </lineage>
</organism>
<keyword id="KW-1003">Cell membrane</keyword>
<keyword id="KW-1015">Disulfide bond</keyword>
<keyword id="KW-0325">Glycoprotein</keyword>
<keyword id="KW-0378">Hydrolase</keyword>
<keyword id="KW-0442">Lipid degradation</keyword>
<keyword id="KW-0443">Lipid metabolism</keyword>
<keyword id="KW-0472">Membrane</keyword>
<keyword id="KW-1185">Reference proteome</keyword>
<keyword id="KW-0964">Secreted</keyword>
<keyword id="KW-0732">Signal</keyword>
<feature type="signal peptide" evidence="3">
    <location>
        <begin position="1"/>
        <end position="26"/>
    </location>
</feature>
<feature type="chain" id="PRO_0000273327" description="Lipase member H-B">
    <location>
        <begin position="27"/>
        <end position="460"/>
    </location>
</feature>
<feature type="active site" description="Nucleophile" evidence="1">
    <location>
        <position position="163"/>
    </location>
</feature>
<feature type="active site" description="Charge relay system" evidence="1">
    <location>
        <position position="187"/>
    </location>
</feature>
<feature type="active site" description="Charge relay system" evidence="1">
    <location>
        <position position="257"/>
    </location>
</feature>
<feature type="glycosylation site" description="N-linked (GlcNAc...) asparagine" evidence="3">
    <location>
        <position position="67"/>
    </location>
</feature>
<feature type="glycosylation site" description="N-linked (GlcNAc...) asparagine" evidence="3">
    <location>
        <position position="75"/>
    </location>
</feature>
<feature type="glycosylation site" description="N-linked (GlcNAc...) asparagine" evidence="3">
    <location>
        <position position="177"/>
    </location>
</feature>
<feature type="glycosylation site" description="N-linked (GlcNAc...) asparagine" evidence="3">
    <location>
        <position position="289"/>
    </location>
</feature>
<feature type="glycosylation site" description="N-linked (GlcNAc...) asparagine" evidence="3">
    <location>
        <position position="366"/>
    </location>
</feature>
<feature type="disulfide bond" evidence="1">
    <location>
        <begin position="242"/>
        <end position="255"/>
    </location>
</feature>
<feature type="disulfide bond" evidence="1">
    <location>
        <begin position="279"/>
        <end position="290"/>
    </location>
</feature>
<feature type="disulfide bond" evidence="1">
    <location>
        <begin position="293"/>
        <end position="301"/>
    </location>
</feature>
<feature type="disulfide bond" evidence="1">
    <location>
        <begin position="436"/>
        <end position="455"/>
    </location>
</feature>
<name>LIPHB_XENLA</name>